<keyword id="KW-1185">Reference proteome</keyword>
<organism>
    <name type="scientific">Halorubrum lacusprofundi (strain ATCC 49239 / DSM 5036 / JCM 8891 / ACAM 34)</name>
    <dbReference type="NCBI Taxonomy" id="416348"/>
    <lineage>
        <taxon>Archaea</taxon>
        <taxon>Methanobacteriati</taxon>
        <taxon>Methanobacteriota</taxon>
        <taxon>Stenosarchaea group</taxon>
        <taxon>Halobacteria</taxon>
        <taxon>Halobacteriales</taxon>
        <taxon>Haloferacaceae</taxon>
        <taxon>Halorubrum</taxon>
    </lineage>
</organism>
<dbReference type="EMBL" id="CP001365">
    <property type="protein sequence ID" value="ACM56467.1"/>
    <property type="molecule type" value="Genomic_DNA"/>
</dbReference>
<dbReference type="RefSeq" id="WP_015909618.1">
    <property type="nucleotide sequence ID" value="NC_012029.1"/>
</dbReference>
<dbReference type="GeneID" id="7401239"/>
<dbReference type="KEGG" id="hla:Hlac_0869"/>
<dbReference type="eggNOG" id="arCOG02119">
    <property type="taxonomic scope" value="Archaea"/>
</dbReference>
<dbReference type="HOGENOM" id="CLU_138334_0_0_2"/>
<dbReference type="Proteomes" id="UP000000740">
    <property type="component" value="Chromosome 1"/>
</dbReference>
<dbReference type="HAMAP" id="MF_01223">
    <property type="entry name" value="UPF0212"/>
    <property type="match status" value="1"/>
</dbReference>
<dbReference type="InterPro" id="IPR007564">
    <property type="entry name" value="UPF0212"/>
</dbReference>
<dbReference type="NCBIfam" id="NF003035">
    <property type="entry name" value="PRK03922.1"/>
    <property type="match status" value="1"/>
</dbReference>
<dbReference type="PANTHER" id="PTHR42199">
    <property type="entry name" value="UPF0212 PROTEIN MJ0068"/>
    <property type="match status" value="1"/>
</dbReference>
<dbReference type="PANTHER" id="PTHR42199:SF1">
    <property type="entry name" value="UPF0212 PROTEIN TK1194"/>
    <property type="match status" value="1"/>
</dbReference>
<dbReference type="Pfam" id="PF04475">
    <property type="entry name" value="DUF555"/>
    <property type="match status" value="1"/>
</dbReference>
<dbReference type="PIRSF" id="PIRSF016934">
    <property type="entry name" value="UCP016934"/>
    <property type="match status" value="1"/>
</dbReference>
<comment type="similarity">
    <text evidence="1">Belongs to the UPF0212 family.</text>
</comment>
<protein>
    <recommendedName>
        <fullName evidence="1">UPF0212 protein Hlac_0869</fullName>
    </recommendedName>
</protein>
<reference key="1">
    <citation type="journal article" date="2016" name="Stand. Genomic Sci.">
        <title>Complete genome sequence of the Antarctic Halorubrum lacusprofundi type strain ACAM 34.</title>
        <authorList>
            <person name="Anderson I.J."/>
            <person name="DasSarma P."/>
            <person name="Lucas S."/>
            <person name="Copeland A."/>
            <person name="Lapidus A."/>
            <person name="Del Rio T.G."/>
            <person name="Tice H."/>
            <person name="Dalin E."/>
            <person name="Bruce D.C."/>
            <person name="Goodwin L."/>
            <person name="Pitluck S."/>
            <person name="Sims D."/>
            <person name="Brettin T.S."/>
            <person name="Detter J.C."/>
            <person name="Han C.S."/>
            <person name="Larimer F."/>
            <person name="Hauser L."/>
            <person name="Land M."/>
            <person name="Ivanova N."/>
            <person name="Richardson P."/>
            <person name="Cavicchioli R."/>
            <person name="DasSarma S."/>
            <person name="Woese C.R."/>
            <person name="Kyrpides N.C."/>
        </authorList>
    </citation>
    <scope>NUCLEOTIDE SEQUENCE [LARGE SCALE GENOMIC DNA]</scope>
    <source>
        <strain>ATCC 49239 / DSM 5036 / JCM 8891 / ACAM 34</strain>
    </source>
</reference>
<sequence>MSNYEVAMEAAWLVRDVKETDDAIGVAVSEAGKRLNETDKQYVEVEPGVTGCPACGEPFDAAFLAANTALVGLLLEIDIFNADSEEHAERIAKSEVGGALRDVPLEIIEVIETDGDEDGDRDDE</sequence>
<evidence type="ECO:0000255" key="1">
    <source>
        <dbReference type="HAMAP-Rule" id="MF_01223"/>
    </source>
</evidence>
<proteinExistence type="inferred from homology"/>
<gene>
    <name type="ordered locus">Hlac_0869</name>
</gene>
<name>Y869_HALLT</name>
<feature type="chain" id="PRO_1000164874" description="UPF0212 protein Hlac_0869">
    <location>
        <begin position="1"/>
        <end position="124"/>
    </location>
</feature>
<accession>B9LUZ0</accession>